<name>RL28_LACDA</name>
<sequence>MAKDFVTGKKTTFGNTRSHALNSSSRSWKPNLQKVRILVNGKPKRVWVSTKTLKSGKVTRV</sequence>
<evidence type="ECO:0000255" key="1">
    <source>
        <dbReference type="HAMAP-Rule" id="MF_00373"/>
    </source>
</evidence>
<evidence type="ECO:0000256" key="2">
    <source>
        <dbReference type="SAM" id="MobiDB-lite"/>
    </source>
</evidence>
<evidence type="ECO:0000305" key="3"/>
<protein>
    <recommendedName>
        <fullName evidence="1">Large ribosomal subunit protein bL28</fullName>
    </recommendedName>
    <alternativeName>
        <fullName evidence="3">50S ribosomal protein L28</fullName>
    </alternativeName>
</protein>
<keyword id="KW-1185">Reference proteome</keyword>
<keyword id="KW-0687">Ribonucleoprotein</keyword>
<keyword id="KW-0689">Ribosomal protein</keyword>
<comment type="similarity">
    <text evidence="1">Belongs to the bacterial ribosomal protein bL28 family.</text>
</comment>
<reference key="1">
    <citation type="journal article" date="2006" name="Proc. Natl. Acad. Sci. U.S.A.">
        <title>The complete genome sequence of Lactobacillus bulgaricus reveals extensive and ongoing reductive evolution.</title>
        <authorList>
            <person name="van de Guchte M."/>
            <person name="Penaud S."/>
            <person name="Grimaldi C."/>
            <person name="Barbe V."/>
            <person name="Bryson K."/>
            <person name="Nicolas P."/>
            <person name="Robert C."/>
            <person name="Oztas S."/>
            <person name="Mangenot S."/>
            <person name="Couloux A."/>
            <person name="Loux V."/>
            <person name="Dervyn R."/>
            <person name="Bossy R."/>
            <person name="Bolotin A."/>
            <person name="Batto J.-M."/>
            <person name="Walunas T."/>
            <person name="Gibrat J.-F."/>
            <person name="Bessieres P."/>
            <person name="Weissenbach J."/>
            <person name="Ehrlich S.D."/>
            <person name="Maguin E."/>
        </authorList>
    </citation>
    <scope>NUCLEOTIDE SEQUENCE [LARGE SCALE GENOMIC DNA]</scope>
    <source>
        <strain>ATCC 11842 / DSM 20081 / BCRC 10696 / JCM 1002 / NBRC 13953 / NCIMB 11778 / NCTC 12712 / WDCM 00102 / Lb 14</strain>
    </source>
</reference>
<gene>
    <name evidence="1" type="primary">rpmB</name>
    <name type="ordered locus">Ldb1392</name>
</gene>
<accession>Q1G9J5</accession>
<dbReference type="EMBL" id="CR954253">
    <property type="protein sequence ID" value="CAI98193.1"/>
    <property type="molecule type" value="Genomic_DNA"/>
</dbReference>
<dbReference type="RefSeq" id="WP_003615500.1">
    <property type="nucleotide sequence ID" value="NZ_JQAV01000006.1"/>
</dbReference>
<dbReference type="SMR" id="Q1G9J5"/>
<dbReference type="STRING" id="390333.Ldb1392"/>
<dbReference type="KEGG" id="ldb:Ldb1392"/>
<dbReference type="eggNOG" id="COG0227">
    <property type="taxonomic scope" value="Bacteria"/>
</dbReference>
<dbReference type="HOGENOM" id="CLU_064548_7_1_9"/>
<dbReference type="BioCyc" id="LDEL390333:LDB_RS10185-MONOMER"/>
<dbReference type="Proteomes" id="UP000001259">
    <property type="component" value="Chromosome"/>
</dbReference>
<dbReference type="GO" id="GO:1990904">
    <property type="term" value="C:ribonucleoprotein complex"/>
    <property type="evidence" value="ECO:0007669"/>
    <property type="project" value="UniProtKB-KW"/>
</dbReference>
<dbReference type="GO" id="GO:0005840">
    <property type="term" value="C:ribosome"/>
    <property type="evidence" value="ECO:0007669"/>
    <property type="project" value="UniProtKB-KW"/>
</dbReference>
<dbReference type="GO" id="GO:0003735">
    <property type="term" value="F:structural constituent of ribosome"/>
    <property type="evidence" value="ECO:0007669"/>
    <property type="project" value="InterPro"/>
</dbReference>
<dbReference type="GO" id="GO:0006412">
    <property type="term" value="P:translation"/>
    <property type="evidence" value="ECO:0007669"/>
    <property type="project" value="UniProtKB-UniRule"/>
</dbReference>
<dbReference type="Gene3D" id="2.30.170.40">
    <property type="entry name" value="Ribosomal protein L28/L24"/>
    <property type="match status" value="1"/>
</dbReference>
<dbReference type="HAMAP" id="MF_00373">
    <property type="entry name" value="Ribosomal_bL28"/>
    <property type="match status" value="1"/>
</dbReference>
<dbReference type="InterPro" id="IPR050096">
    <property type="entry name" value="Bacterial_rp_bL28"/>
</dbReference>
<dbReference type="InterPro" id="IPR026569">
    <property type="entry name" value="Ribosomal_bL28"/>
</dbReference>
<dbReference type="InterPro" id="IPR034704">
    <property type="entry name" value="Ribosomal_bL28/bL31-like_sf"/>
</dbReference>
<dbReference type="InterPro" id="IPR001383">
    <property type="entry name" value="Ribosomal_bL28_bact-type"/>
</dbReference>
<dbReference type="InterPro" id="IPR037147">
    <property type="entry name" value="Ribosomal_bL28_sf"/>
</dbReference>
<dbReference type="NCBIfam" id="TIGR00009">
    <property type="entry name" value="L28"/>
    <property type="match status" value="1"/>
</dbReference>
<dbReference type="PANTHER" id="PTHR39080">
    <property type="entry name" value="50S RIBOSOMAL PROTEIN L28"/>
    <property type="match status" value="1"/>
</dbReference>
<dbReference type="PANTHER" id="PTHR39080:SF1">
    <property type="entry name" value="LARGE RIBOSOMAL SUBUNIT PROTEIN BL28A"/>
    <property type="match status" value="1"/>
</dbReference>
<dbReference type="Pfam" id="PF00830">
    <property type="entry name" value="Ribosomal_L28"/>
    <property type="match status" value="1"/>
</dbReference>
<dbReference type="SUPFAM" id="SSF143800">
    <property type="entry name" value="L28p-like"/>
    <property type="match status" value="1"/>
</dbReference>
<feature type="chain" id="PRO_1000007260" description="Large ribosomal subunit protein bL28">
    <location>
        <begin position="1"/>
        <end position="61"/>
    </location>
</feature>
<feature type="region of interest" description="Disordered" evidence="2">
    <location>
        <begin position="1"/>
        <end position="27"/>
    </location>
</feature>
<feature type="compositionally biased region" description="Polar residues" evidence="2">
    <location>
        <begin position="9"/>
        <end position="27"/>
    </location>
</feature>
<organism>
    <name type="scientific">Lactobacillus delbrueckii subsp. bulgaricus (strain ATCC 11842 / DSM 20081 / BCRC 10696 / JCM 1002 / NBRC 13953 / NCIMB 11778 / NCTC 12712 / WDCM 00102 / Lb 14)</name>
    <dbReference type="NCBI Taxonomy" id="390333"/>
    <lineage>
        <taxon>Bacteria</taxon>
        <taxon>Bacillati</taxon>
        <taxon>Bacillota</taxon>
        <taxon>Bacilli</taxon>
        <taxon>Lactobacillales</taxon>
        <taxon>Lactobacillaceae</taxon>
        <taxon>Lactobacillus</taxon>
    </lineage>
</organism>
<proteinExistence type="inferred from homology"/>